<sequence>MSTHQTHLKQLEAESIQIMREVAAEFDNPVMLYSVGKDSSVLLHLARKAFYPGKIPFPLMHVDTNWKFKEMIEFRDQMAEKHGFDLIVHKNPRGLEMNISPFTHGSAKHTDIMKTEGLKQALDAHGFDAAFGGARRDEEKSRAKERVYSFRDNKHRWDPKNQRPELWNIYNGKVDKGESIRVFPLSNWTELDIWQYIYLEGIEIPSLYLATERPVVERDGTLIMVDDERMPLEADEDVQNKMVRFRTLGCYPLTGAVESQAQTLPEIIQEMLLCTTSERQGRVIDNDSAGSMEKKKIEGYF</sequence>
<name>CYSD_SHEWM</name>
<organism>
    <name type="scientific">Shewanella woodyi (strain ATCC 51908 / MS32)</name>
    <dbReference type="NCBI Taxonomy" id="392500"/>
    <lineage>
        <taxon>Bacteria</taxon>
        <taxon>Pseudomonadati</taxon>
        <taxon>Pseudomonadota</taxon>
        <taxon>Gammaproteobacteria</taxon>
        <taxon>Alteromonadales</taxon>
        <taxon>Shewanellaceae</taxon>
        <taxon>Shewanella</taxon>
    </lineage>
</organism>
<comment type="function">
    <text evidence="1">With CysN forms the ATP sulfurylase (ATPS) that catalyzes the adenylation of sulfate producing adenosine 5'-phosphosulfate (APS) and diphosphate, the first enzymatic step in sulfur assimilation pathway. APS synthesis involves the formation of a high-energy phosphoric-sulfuric acid anhydride bond driven by GTP hydrolysis by CysN coupled to ATP hydrolysis by CysD.</text>
</comment>
<comment type="catalytic activity">
    <reaction evidence="1">
        <text>sulfate + ATP + H(+) = adenosine 5'-phosphosulfate + diphosphate</text>
        <dbReference type="Rhea" id="RHEA:18133"/>
        <dbReference type="ChEBI" id="CHEBI:15378"/>
        <dbReference type="ChEBI" id="CHEBI:16189"/>
        <dbReference type="ChEBI" id="CHEBI:30616"/>
        <dbReference type="ChEBI" id="CHEBI:33019"/>
        <dbReference type="ChEBI" id="CHEBI:58243"/>
        <dbReference type="EC" id="2.7.7.4"/>
    </reaction>
</comment>
<comment type="pathway">
    <text evidence="1">Sulfur metabolism; hydrogen sulfide biosynthesis; sulfite from sulfate: step 1/3.</text>
</comment>
<comment type="subunit">
    <text evidence="1">Heterodimer composed of CysD, the smaller subunit, and CysN.</text>
</comment>
<comment type="similarity">
    <text evidence="1">Belongs to the PAPS reductase family. CysD subfamily.</text>
</comment>
<feature type="chain" id="PRO_1000092226" description="Sulfate adenylyltransferase subunit 2">
    <location>
        <begin position="1"/>
        <end position="301"/>
    </location>
</feature>
<protein>
    <recommendedName>
        <fullName evidence="1">Sulfate adenylyltransferase subunit 2</fullName>
        <ecNumber evidence="1">2.7.7.4</ecNumber>
    </recommendedName>
    <alternativeName>
        <fullName evidence="1">ATP-sulfurylase small subunit</fullName>
    </alternativeName>
    <alternativeName>
        <fullName evidence="1">Sulfate adenylate transferase</fullName>
        <shortName evidence="1">SAT</shortName>
    </alternativeName>
</protein>
<reference key="1">
    <citation type="submission" date="2008-02" db="EMBL/GenBank/DDBJ databases">
        <title>Complete sequence of Shewanella woodyi ATCC 51908.</title>
        <authorList>
            <consortium name="US DOE Joint Genome Institute"/>
            <person name="Copeland A."/>
            <person name="Lucas S."/>
            <person name="Lapidus A."/>
            <person name="Glavina del Rio T."/>
            <person name="Dalin E."/>
            <person name="Tice H."/>
            <person name="Bruce D."/>
            <person name="Goodwin L."/>
            <person name="Pitluck S."/>
            <person name="Sims D."/>
            <person name="Brettin T."/>
            <person name="Detter J.C."/>
            <person name="Han C."/>
            <person name="Kuske C.R."/>
            <person name="Schmutz J."/>
            <person name="Larimer F."/>
            <person name="Land M."/>
            <person name="Hauser L."/>
            <person name="Kyrpides N."/>
            <person name="Lykidis A."/>
            <person name="Zhao J.-S."/>
            <person name="Richardson P."/>
        </authorList>
    </citation>
    <scope>NUCLEOTIDE SEQUENCE [LARGE SCALE GENOMIC DNA]</scope>
    <source>
        <strain>ATCC 51908 / MS32</strain>
    </source>
</reference>
<proteinExistence type="inferred from homology"/>
<accession>B1KMH3</accession>
<dbReference type="EC" id="2.7.7.4" evidence="1"/>
<dbReference type="EMBL" id="CP000961">
    <property type="protein sequence ID" value="ACA85971.1"/>
    <property type="molecule type" value="Genomic_DNA"/>
</dbReference>
<dbReference type="RefSeq" id="WP_012324317.1">
    <property type="nucleotide sequence ID" value="NC_010506.1"/>
</dbReference>
<dbReference type="SMR" id="B1KMH3"/>
<dbReference type="STRING" id="392500.Swoo_1686"/>
<dbReference type="KEGG" id="swd:Swoo_1686"/>
<dbReference type="eggNOG" id="COG0175">
    <property type="taxonomic scope" value="Bacteria"/>
</dbReference>
<dbReference type="HOGENOM" id="CLU_043026_0_0_6"/>
<dbReference type="UniPathway" id="UPA00140">
    <property type="reaction ID" value="UER00204"/>
</dbReference>
<dbReference type="Proteomes" id="UP000002168">
    <property type="component" value="Chromosome"/>
</dbReference>
<dbReference type="GO" id="GO:0005524">
    <property type="term" value="F:ATP binding"/>
    <property type="evidence" value="ECO:0007669"/>
    <property type="project" value="UniProtKB-KW"/>
</dbReference>
<dbReference type="GO" id="GO:0004781">
    <property type="term" value="F:sulfate adenylyltransferase (ATP) activity"/>
    <property type="evidence" value="ECO:0007669"/>
    <property type="project" value="UniProtKB-UniRule"/>
</dbReference>
<dbReference type="GO" id="GO:0070814">
    <property type="term" value="P:hydrogen sulfide biosynthetic process"/>
    <property type="evidence" value="ECO:0007669"/>
    <property type="project" value="UniProtKB-UniRule"/>
</dbReference>
<dbReference type="GO" id="GO:0000103">
    <property type="term" value="P:sulfate assimilation"/>
    <property type="evidence" value="ECO:0007669"/>
    <property type="project" value="UniProtKB-UniRule"/>
</dbReference>
<dbReference type="CDD" id="cd23946">
    <property type="entry name" value="Sulfate_adenylyltransferase_2"/>
    <property type="match status" value="1"/>
</dbReference>
<dbReference type="FunFam" id="3.40.50.620:FF:000002">
    <property type="entry name" value="Sulfate adenylyltransferase subunit 2"/>
    <property type="match status" value="1"/>
</dbReference>
<dbReference type="Gene3D" id="3.40.50.620">
    <property type="entry name" value="HUPs"/>
    <property type="match status" value="1"/>
</dbReference>
<dbReference type="HAMAP" id="MF_00064">
    <property type="entry name" value="Sulf_adenylyltr_sub2"/>
    <property type="match status" value="1"/>
</dbReference>
<dbReference type="InterPro" id="IPR002500">
    <property type="entry name" value="PAPS_reduct_dom"/>
</dbReference>
<dbReference type="InterPro" id="IPR014729">
    <property type="entry name" value="Rossmann-like_a/b/a_fold"/>
</dbReference>
<dbReference type="InterPro" id="IPR011784">
    <property type="entry name" value="SO4_adenylTrfase_ssu"/>
</dbReference>
<dbReference type="InterPro" id="IPR050128">
    <property type="entry name" value="Sulfate_adenylyltrnsfr_sub2"/>
</dbReference>
<dbReference type="NCBIfam" id="TIGR02039">
    <property type="entry name" value="CysD"/>
    <property type="match status" value="1"/>
</dbReference>
<dbReference type="NCBIfam" id="NF003587">
    <property type="entry name" value="PRK05253.1"/>
    <property type="match status" value="1"/>
</dbReference>
<dbReference type="NCBIfam" id="NF009214">
    <property type="entry name" value="PRK12563.1"/>
    <property type="match status" value="1"/>
</dbReference>
<dbReference type="PANTHER" id="PTHR43196">
    <property type="entry name" value="SULFATE ADENYLYLTRANSFERASE SUBUNIT 2"/>
    <property type="match status" value="1"/>
</dbReference>
<dbReference type="PANTHER" id="PTHR43196:SF1">
    <property type="entry name" value="SULFATE ADENYLYLTRANSFERASE SUBUNIT 2"/>
    <property type="match status" value="1"/>
</dbReference>
<dbReference type="Pfam" id="PF01507">
    <property type="entry name" value="PAPS_reduct"/>
    <property type="match status" value="1"/>
</dbReference>
<dbReference type="PIRSF" id="PIRSF002936">
    <property type="entry name" value="CysDAde_trans"/>
    <property type="match status" value="1"/>
</dbReference>
<dbReference type="SUPFAM" id="SSF52402">
    <property type="entry name" value="Adenine nucleotide alpha hydrolases-like"/>
    <property type="match status" value="1"/>
</dbReference>
<evidence type="ECO:0000255" key="1">
    <source>
        <dbReference type="HAMAP-Rule" id="MF_00064"/>
    </source>
</evidence>
<gene>
    <name evidence="1" type="primary">cysD</name>
    <name type="ordered locus">Swoo_1686</name>
</gene>
<keyword id="KW-0067">ATP-binding</keyword>
<keyword id="KW-0547">Nucleotide-binding</keyword>
<keyword id="KW-0548">Nucleotidyltransferase</keyword>
<keyword id="KW-1185">Reference proteome</keyword>
<keyword id="KW-0808">Transferase</keyword>